<reference key="1">
    <citation type="submission" date="2002-07" db="EMBL/GenBank/DDBJ databases">
        <title>Parsing out signal and noise for seed-plant phylogenetic inference.</title>
        <authorList>
            <person name="Graham S.W."/>
            <person name="Rai H.S."/>
            <person name="Ikegami K."/>
            <person name="Reeves P.A."/>
            <person name="Olmstead R.G."/>
        </authorList>
    </citation>
    <scope>NUCLEOTIDE SEQUENCE [GENOMIC DNA]</scope>
</reference>
<proteinExistence type="inferred from homology"/>
<dbReference type="EMBL" id="AF528906">
    <property type="protein sequence ID" value="AAQ09410.1"/>
    <property type="molecule type" value="Genomic_DNA"/>
</dbReference>
<dbReference type="RefSeq" id="YP_010533524.1">
    <property type="nucleotide sequence ID" value="NC_067846.1"/>
</dbReference>
<dbReference type="SMR" id="Q6EYG3"/>
<dbReference type="GeneID" id="76340652"/>
<dbReference type="GO" id="GO:0009535">
    <property type="term" value="C:chloroplast thylakoid membrane"/>
    <property type="evidence" value="ECO:0007669"/>
    <property type="project" value="UniProtKB-SubCell"/>
</dbReference>
<dbReference type="GO" id="GO:0015979">
    <property type="term" value="P:photosynthesis"/>
    <property type="evidence" value="ECO:0007669"/>
    <property type="project" value="InterPro"/>
</dbReference>
<dbReference type="HAMAP" id="MF_00293">
    <property type="entry name" value="PSII_PsbN"/>
    <property type="match status" value="1"/>
</dbReference>
<dbReference type="InterPro" id="IPR003398">
    <property type="entry name" value="PSII_PsbN"/>
</dbReference>
<dbReference type="PANTHER" id="PTHR35326">
    <property type="entry name" value="PROTEIN PSBN"/>
    <property type="match status" value="1"/>
</dbReference>
<dbReference type="PANTHER" id="PTHR35326:SF3">
    <property type="entry name" value="PROTEIN PSBN"/>
    <property type="match status" value="1"/>
</dbReference>
<dbReference type="Pfam" id="PF02468">
    <property type="entry name" value="PsbN"/>
    <property type="match status" value="1"/>
</dbReference>
<organism>
    <name type="scientific">Phytolacca americana</name>
    <name type="common">American pokeweed</name>
    <name type="synonym">Phytolacca decandra</name>
    <dbReference type="NCBI Taxonomy" id="3527"/>
    <lineage>
        <taxon>Eukaryota</taxon>
        <taxon>Viridiplantae</taxon>
        <taxon>Streptophyta</taxon>
        <taxon>Embryophyta</taxon>
        <taxon>Tracheophyta</taxon>
        <taxon>Spermatophyta</taxon>
        <taxon>Magnoliopsida</taxon>
        <taxon>eudicotyledons</taxon>
        <taxon>Gunneridae</taxon>
        <taxon>Pentapetalae</taxon>
        <taxon>Caryophyllales</taxon>
        <taxon>Phytolaccaceae</taxon>
        <taxon>Phytolacca</taxon>
    </lineage>
</organism>
<gene>
    <name evidence="1" type="primary">psbN</name>
</gene>
<keyword id="KW-0150">Chloroplast</keyword>
<keyword id="KW-0472">Membrane</keyword>
<keyword id="KW-0934">Plastid</keyword>
<keyword id="KW-0793">Thylakoid</keyword>
<keyword id="KW-0812">Transmembrane</keyword>
<keyword id="KW-1133">Transmembrane helix</keyword>
<comment type="function">
    <text evidence="1">May play a role in photosystem I and II biogenesis.</text>
</comment>
<comment type="subcellular location">
    <subcellularLocation>
        <location evidence="1">Plastid</location>
        <location evidence="1">Chloroplast thylakoid membrane</location>
        <topology evidence="1">Single-pass membrane protein</topology>
    </subcellularLocation>
</comment>
<comment type="similarity">
    <text evidence="1">Belongs to the PsbN family.</text>
</comment>
<comment type="caution">
    <text evidence="1">Originally thought to be a component of PSII; based on experiments in Synechocystis, N.tabacum and barley, and its absence from PSII in T.elongatus and T.vulcanus, this is probably not true.</text>
</comment>
<evidence type="ECO:0000255" key="1">
    <source>
        <dbReference type="HAMAP-Rule" id="MF_00293"/>
    </source>
</evidence>
<geneLocation type="chloroplast"/>
<sequence>METATLVAIFISGLLVSFTGYALYTAFGQPSQQLRDPFEEHGD</sequence>
<feature type="chain" id="PRO_0000207939" description="Protein PsbN">
    <location>
        <begin position="1"/>
        <end position="43"/>
    </location>
</feature>
<feature type="transmembrane region" description="Helical" evidence="1">
    <location>
        <begin position="7"/>
        <end position="27"/>
    </location>
</feature>
<protein>
    <recommendedName>
        <fullName evidence="1">Protein PsbN</fullName>
    </recommendedName>
</protein>
<accession>Q6EYG3</accession>
<name>PSBN_PHYAM</name>